<comment type="function">
    <text>Carrier of the growing fatty acid chain in fatty acid biosynthesis.</text>
</comment>
<comment type="pathway">
    <text evidence="1">Lipid metabolism; fatty acid biosynthesis.</text>
</comment>
<comment type="subcellular location">
    <subcellularLocation>
        <location evidence="1">Cytoplasm</location>
    </subcellularLocation>
</comment>
<comment type="PTM">
    <text>4'-phosphopantetheine is transferred from CoA to a specific serine of apo-ACP by AcpS. This modification is essential for activity because fatty acids are bound in thioester linkage to the sulfhydryl of the prosthetic group.</text>
</comment>
<comment type="similarity">
    <text evidence="1">Belongs to the acyl carrier protein (ACP) family.</text>
</comment>
<keyword id="KW-0963">Cytoplasm</keyword>
<keyword id="KW-0903">Direct protein sequencing</keyword>
<keyword id="KW-0275">Fatty acid biosynthesis</keyword>
<keyword id="KW-0276">Fatty acid metabolism</keyword>
<keyword id="KW-0444">Lipid biosynthesis</keyword>
<keyword id="KW-0443">Lipid metabolism</keyword>
<keyword id="KW-0596">Phosphopantetheine</keyword>
<keyword id="KW-0597">Phosphoprotein</keyword>
<gene>
    <name evidence="1" type="primary">acpP</name>
</gene>
<reference key="1">
    <citation type="journal article" date="1997" name="J. Bacteriol.">
        <title>Domains of Escherichia coli acyl carrier protein important for membrane-derived-oligosaccharide biosynthesis.</title>
        <authorList>
            <person name="Tang L."/>
            <person name="Weissborn A.C."/>
            <person name="Kennedy E.P."/>
        </authorList>
    </citation>
    <scope>PROTEIN SEQUENCE OF 2-77</scope>
    <scope>PHOSPHOPANTETHEINYLATION AT SER-37</scope>
    <source>
        <strain>ATCC 25107 / DSM 2157 / CECT 5016 / NCIMB 2222</strain>
    </source>
</reference>
<evidence type="ECO:0000255" key="1">
    <source>
        <dbReference type="HAMAP-Rule" id="MF_01217"/>
    </source>
</evidence>
<evidence type="ECO:0000255" key="2">
    <source>
        <dbReference type="PROSITE-ProRule" id="PRU00258"/>
    </source>
</evidence>
<evidence type="ECO:0000269" key="3">
    <source>
    </source>
</evidence>
<accession>P80920</accession>
<dbReference type="SMR" id="P80920"/>
<dbReference type="UniPathway" id="UPA00094"/>
<dbReference type="GO" id="GO:0005829">
    <property type="term" value="C:cytosol"/>
    <property type="evidence" value="ECO:0007669"/>
    <property type="project" value="TreeGrafter"/>
</dbReference>
<dbReference type="GO" id="GO:0016020">
    <property type="term" value="C:membrane"/>
    <property type="evidence" value="ECO:0007669"/>
    <property type="project" value="GOC"/>
</dbReference>
<dbReference type="GO" id="GO:0000035">
    <property type="term" value="F:acyl binding"/>
    <property type="evidence" value="ECO:0007669"/>
    <property type="project" value="TreeGrafter"/>
</dbReference>
<dbReference type="GO" id="GO:0000036">
    <property type="term" value="F:acyl carrier activity"/>
    <property type="evidence" value="ECO:0007669"/>
    <property type="project" value="UniProtKB-UniRule"/>
</dbReference>
<dbReference type="GO" id="GO:0031177">
    <property type="term" value="F:phosphopantetheine binding"/>
    <property type="evidence" value="ECO:0007669"/>
    <property type="project" value="InterPro"/>
</dbReference>
<dbReference type="GO" id="GO:0009245">
    <property type="term" value="P:lipid A biosynthetic process"/>
    <property type="evidence" value="ECO:0007669"/>
    <property type="project" value="TreeGrafter"/>
</dbReference>
<dbReference type="FunFam" id="1.10.1200.10:FF:000001">
    <property type="entry name" value="Acyl carrier protein"/>
    <property type="match status" value="1"/>
</dbReference>
<dbReference type="Gene3D" id="1.10.1200.10">
    <property type="entry name" value="ACP-like"/>
    <property type="match status" value="1"/>
</dbReference>
<dbReference type="HAMAP" id="MF_01217">
    <property type="entry name" value="Acyl_carrier"/>
    <property type="match status" value="1"/>
</dbReference>
<dbReference type="InterPro" id="IPR003231">
    <property type="entry name" value="ACP"/>
</dbReference>
<dbReference type="InterPro" id="IPR036736">
    <property type="entry name" value="ACP-like_sf"/>
</dbReference>
<dbReference type="InterPro" id="IPR020806">
    <property type="entry name" value="PKS_PP-bd"/>
</dbReference>
<dbReference type="InterPro" id="IPR009081">
    <property type="entry name" value="PP-bd_ACP"/>
</dbReference>
<dbReference type="InterPro" id="IPR006162">
    <property type="entry name" value="Ppantetheine_attach_site"/>
</dbReference>
<dbReference type="NCBIfam" id="TIGR00517">
    <property type="entry name" value="acyl_carrier"/>
    <property type="match status" value="1"/>
</dbReference>
<dbReference type="NCBIfam" id="NF002148">
    <property type="entry name" value="PRK00982.1-2"/>
    <property type="match status" value="1"/>
</dbReference>
<dbReference type="NCBIfam" id="NF002149">
    <property type="entry name" value="PRK00982.1-3"/>
    <property type="match status" value="1"/>
</dbReference>
<dbReference type="NCBIfam" id="NF002150">
    <property type="entry name" value="PRK00982.1-4"/>
    <property type="match status" value="1"/>
</dbReference>
<dbReference type="NCBIfam" id="NF002151">
    <property type="entry name" value="PRK00982.1-5"/>
    <property type="match status" value="1"/>
</dbReference>
<dbReference type="PANTHER" id="PTHR20863">
    <property type="entry name" value="ACYL CARRIER PROTEIN"/>
    <property type="match status" value="1"/>
</dbReference>
<dbReference type="PANTHER" id="PTHR20863:SF76">
    <property type="entry name" value="CARRIER DOMAIN-CONTAINING PROTEIN"/>
    <property type="match status" value="1"/>
</dbReference>
<dbReference type="Pfam" id="PF00550">
    <property type="entry name" value="PP-binding"/>
    <property type="match status" value="1"/>
</dbReference>
<dbReference type="SMART" id="SM00823">
    <property type="entry name" value="PKS_PP"/>
    <property type="match status" value="1"/>
</dbReference>
<dbReference type="SUPFAM" id="SSF47336">
    <property type="entry name" value="ACP-like"/>
    <property type="match status" value="1"/>
</dbReference>
<dbReference type="PROSITE" id="PS50075">
    <property type="entry name" value="CARRIER"/>
    <property type="match status" value="1"/>
</dbReference>
<dbReference type="PROSITE" id="PS00012">
    <property type="entry name" value="PHOSPHOPANTETHEINE"/>
    <property type="match status" value="1"/>
</dbReference>
<organism>
    <name type="scientific">Leucothrix mucor</name>
    <dbReference type="NCBI Taxonomy" id="45248"/>
    <lineage>
        <taxon>Bacteria</taxon>
        <taxon>Pseudomonadati</taxon>
        <taxon>Pseudomonadota</taxon>
        <taxon>Gammaproteobacteria</taxon>
        <taxon>Thiotrichales</taxon>
        <taxon>Thiotrichaceae</taxon>
        <taxon>Leucothrix</taxon>
    </lineage>
</organism>
<feature type="initiator methionine" description="Removed" evidence="3">
    <location>
        <position position="1"/>
    </location>
</feature>
<feature type="chain" id="PRO_0000180149" description="Acyl carrier protein">
    <location>
        <begin position="2"/>
        <end position="77"/>
    </location>
</feature>
<feature type="domain" description="Carrier" evidence="2">
    <location>
        <begin position="2"/>
        <end position="77"/>
    </location>
</feature>
<feature type="modified residue" description="O-(pantetheine 4'-phosphoryl)serine" evidence="2 3">
    <location>
        <position position="37"/>
    </location>
</feature>
<name>ACP_LEUMU</name>
<sequence>MSDIEQRVKNVVVEQLGVDEAEVTNAASFVDDLGADSLDTVELVMALEEEFGTEIPDEEAEKITTVQLAIDYVKSHQ</sequence>
<protein>
    <recommendedName>
        <fullName evidence="1">Acyl carrier protein</fullName>
        <shortName evidence="1">ACP</shortName>
    </recommendedName>
</protein>
<proteinExistence type="evidence at protein level"/>